<comment type="function">
    <text evidence="1">Activates KDO (a required 8-carbon sugar) for incorporation into bacterial lipopolysaccharide in Gram-negative bacteria.</text>
</comment>
<comment type="catalytic activity">
    <reaction evidence="1">
        <text>3-deoxy-alpha-D-manno-oct-2-ulosonate + CTP = CMP-3-deoxy-beta-D-manno-octulosonate + diphosphate</text>
        <dbReference type="Rhea" id="RHEA:23448"/>
        <dbReference type="ChEBI" id="CHEBI:33019"/>
        <dbReference type="ChEBI" id="CHEBI:37563"/>
        <dbReference type="ChEBI" id="CHEBI:85986"/>
        <dbReference type="ChEBI" id="CHEBI:85987"/>
        <dbReference type="EC" id="2.7.7.38"/>
    </reaction>
</comment>
<comment type="pathway">
    <text evidence="1">Nucleotide-sugar biosynthesis; CMP-3-deoxy-D-manno-octulosonate biosynthesis; CMP-3-deoxy-D-manno-octulosonate from 3-deoxy-D-manno-octulosonate and CTP: step 1/1.</text>
</comment>
<comment type="pathway">
    <text evidence="1">Bacterial outer membrane biogenesis; lipopolysaccharide biosynthesis.</text>
</comment>
<comment type="subcellular location">
    <subcellularLocation>
        <location evidence="1">Cytoplasm</location>
    </subcellularLocation>
</comment>
<comment type="similarity">
    <text evidence="1">Belongs to the KdsB family.</text>
</comment>
<keyword id="KW-0963">Cytoplasm</keyword>
<keyword id="KW-0448">Lipopolysaccharide biosynthesis</keyword>
<keyword id="KW-0548">Nucleotidyltransferase</keyword>
<keyword id="KW-1185">Reference proteome</keyword>
<keyword id="KW-0808">Transferase</keyword>
<organism>
    <name type="scientific">Shigella dysenteriae serotype 1 (strain Sd197)</name>
    <dbReference type="NCBI Taxonomy" id="300267"/>
    <lineage>
        <taxon>Bacteria</taxon>
        <taxon>Pseudomonadati</taxon>
        <taxon>Pseudomonadota</taxon>
        <taxon>Gammaproteobacteria</taxon>
        <taxon>Enterobacterales</taxon>
        <taxon>Enterobacteriaceae</taxon>
        <taxon>Shigella</taxon>
    </lineage>
</organism>
<sequence length="248" mass="27610">MSFVVIIPARYASTRLPGKPLVDINGKPMIVHVLERARESGADRIIVATDHEDVARAVEAAGGEVCMTRADHQSGTERLAEVVEKCAFSDDTVIVNVQGDEPMIPATIIRQVADNLAQRQVGMATLAVPIHNAEEAFNPNAVKVVLDAEGYALYFSRATIPWERDRFAKGLETVGDNFLRHLGIYGYRAGFIRRYVTWQPSPLEHIEMLEQLRVLWYGEKIHVAVAHEVPGTGVDTPEDLERVRAEMR</sequence>
<proteinExistence type="inferred from homology"/>
<protein>
    <recommendedName>
        <fullName evidence="1">3-deoxy-manno-octulosonate cytidylyltransferase</fullName>
        <ecNumber evidence="1">2.7.7.38</ecNumber>
    </recommendedName>
    <alternativeName>
        <fullName evidence="1">CMP-2-keto-3-deoxyoctulosonic acid synthase</fullName>
        <shortName evidence="1">CKS</shortName>
        <shortName evidence="1">CMP-KDO synthase</shortName>
    </alternativeName>
</protein>
<feature type="chain" id="PRO_1000003382" description="3-deoxy-manno-octulosonate cytidylyltransferase">
    <location>
        <begin position="1"/>
        <end position="248"/>
    </location>
</feature>
<evidence type="ECO:0000255" key="1">
    <source>
        <dbReference type="HAMAP-Rule" id="MF_00057"/>
    </source>
</evidence>
<accession>Q32E38</accession>
<dbReference type="EC" id="2.7.7.38" evidence="1"/>
<dbReference type="EMBL" id="CP000034">
    <property type="protein sequence ID" value="ABB62417.1"/>
    <property type="molecule type" value="Genomic_DNA"/>
</dbReference>
<dbReference type="RefSeq" id="WP_000011593.1">
    <property type="nucleotide sequence ID" value="NC_007606.1"/>
</dbReference>
<dbReference type="RefSeq" id="YP_403908.1">
    <property type="nucleotide sequence ID" value="NC_007606.1"/>
</dbReference>
<dbReference type="SMR" id="Q32E38"/>
<dbReference type="STRING" id="300267.SDY_2340"/>
<dbReference type="EnsemblBacteria" id="ABB62417">
    <property type="protein sequence ID" value="ABB62417"/>
    <property type="gene ID" value="SDY_2340"/>
</dbReference>
<dbReference type="KEGG" id="sdy:SDY_2340"/>
<dbReference type="PATRIC" id="fig|300267.13.peg.2824"/>
<dbReference type="HOGENOM" id="CLU_065038_1_0_6"/>
<dbReference type="UniPathway" id="UPA00030"/>
<dbReference type="UniPathway" id="UPA00358">
    <property type="reaction ID" value="UER00476"/>
</dbReference>
<dbReference type="Proteomes" id="UP000002716">
    <property type="component" value="Chromosome"/>
</dbReference>
<dbReference type="GO" id="GO:0005829">
    <property type="term" value="C:cytosol"/>
    <property type="evidence" value="ECO:0007669"/>
    <property type="project" value="TreeGrafter"/>
</dbReference>
<dbReference type="GO" id="GO:0008690">
    <property type="term" value="F:3-deoxy-manno-octulosonate cytidylyltransferase activity"/>
    <property type="evidence" value="ECO:0007669"/>
    <property type="project" value="UniProtKB-UniRule"/>
</dbReference>
<dbReference type="GO" id="GO:0033468">
    <property type="term" value="P:CMP-keto-3-deoxy-D-manno-octulosonic acid biosynthetic process"/>
    <property type="evidence" value="ECO:0007669"/>
    <property type="project" value="UniProtKB-UniRule"/>
</dbReference>
<dbReference type="GO" id="GO:0009103">
    <property type="term" value="P:lipopolysaccharide biosynthetic process"/>
    <property type="evidence" value="ECO:0007669"/>
    <property type="project" value="UniProtKB-UniRule"/>
</dbReference>
<dbReference type="CDD" id="cd02517">
    <property type="entry name" value="CMP-KDO-Synthetase"/>
    <property type="match status" value="1"/>
</dbReference>
<dbReference type="FunFam" id="3.90.550.10:FF:000011">
    <property type="entry name" value="3-deoxy-manno-octulosonate cytidylyltransferase"/>
    <property type="match status" value="1"/>
</dbReference>
<dbReference type="Gene3D" id="3.90.550.10">
    <property type="entry name" value="Spore Coat Polysaccharide Biosynthesis Protein SpsA, Chain A"/>
    <property type="match status" value="1"/>
</dbReference>
<dbReference type="HAMAP" id="MF_00057">
    <property type="entry name" value="KdsB"/>
    <property type="match status" value="1"/>
</dbReference>
<dbReference type="InterPro" id="IPR003329">
    <property type="entry name" value="Cytidylyl_trans"/>
</dbReference>
<dbReference type="InterPro" id="IPR004528">
    <property type="entry name" value="KdsB"/>
</dbReference>
<dbReference type="InterPro" id="IPR029044">
    <property type="entry name" value="Nucleotide-diphossugar_trans"/>
</dbReference>
<dbReference type="NCBIfam" id="TIGR00466">
    <property type="entry name" value="kdsB"/>
    <property type="match status" value="1"/>
</dbReference>
<dbReference type="NCBIfam" id="NF003950">
    <property type="entry name" value="PRK05450.1-3"/>
    <property type="match status" value="1"/>
</dbReference>
<dbReference type="NCBIfam" id="NF003952">
    <property type="entry name" value="PRK05450.1-5"/>
    <property type="match status" value="1"/>
</dbReference>
<dbReference type="NCBIfam" id="NF009905">
    <property type="entry name" value="PRK13368.1"/>
    <property type="match status" value="1"/>
</dbReference>
<dbReference type="PANTHER" id="PTHR42866">
    <property type="entry name" value="3-DEOXY-MANNO-OCTULOSONATE CYTIDYLYLTRANSFERASE"/>
    <property type="match status" value="1"/>
</dbReference>
<dbReference type="PANTHER" id="PTHR42866:SF2">
    <property type="entry name" value="3-DEOXY-MANNO-OCTULOSONATE CYTIDYLYLTRANSFERASE, MITOCHONDRIAL"/>
    <property type="match status" value="1"/>
</dbReference>
<dbReference type="Pfam" id="PF02348">
    <property type="entry name" value="CTP_transf_3"/>
    <property type="match status" value="1"/>
</dbReference>
<dbReference type="SUPFAM" id="SSF53448">
    <property type="entry name" value="Nucleotide-diphospho-sugar transferases"/>
    <property type="match status" value="1"/>
</dbReference>
<name>KDSB_SHIDS</name>
<reference key="1">
    <citation type="journal article" date="2005" name="Nucleic Acids Res.">
        <title>Genome dynamics and diversity of Shigella species, the etiologic agents of bacillary dysentery.</title>
        <authorList>
            <person name="Yang F."/>
            <person name="Yang J."/>
            <person name="Zhang X."/>
            <person name="Chen L."/>
            <person name="Jiang Y."/>
            <person name="Yan Y."/>
            <person name="Tang X."/>
            <person name="Wang J."/>
            <person name="Xiong Z."/>
            <person name="Dong J."/>
            <person name="Xue Y."/>
            <person name="Zhu Y."/>
            <person name="Xu X."/>
            <person name="Sun L."/>
            <person name="Chen S."/>
            <person name="Nie H."/>
            <person name="Peng J."/>
            <person name="Xu J."/>
            <person name="Wang Y."/>
            <person name="Yuan Z."/>
            <person name="Wen Y."/>
            <person name="Yao Z."/>
            <person name="Shen Y."/>
            <person name="Qiang B."/>
            <person name="Hou Y."/>
            <person name="Yu J."/>
            <person name="Jin Q."/>
        </authorList>
    </citation>
    <scope>NUCLEOTIDE SEQUENCE [LARGE SCALE GENOMIC DNA]</scope>
    <source>
        <strain>Sd197</strain>
    </source>
</reference>
<gene>
    <name evidence="1" type="primary">kdsB</name>
    <name type="ordered locus">SDY_2340</name>
</gene>